<proteinExistence type="inferred from homology"/>
<accession>Q493S5</accession>
<evidence type="ECO:0000255" key="1">
    <source>
        <dbReference type="HAMAP-Rule" id="MF_00500"/>
    </source>
</evidence>
<evidence type="ECO:0000256" key="2">
    <source>
        <dbReference type="SAM" id="MobiDB-lite"/>
    </source>
</evidence>
<evidence type="ECO:0000305" key="3"/>
<comment type="function">
    <text evidence="1">Binds directly to 16S ribosomal RNA.</text>
</comment>
<comment type="similarity">
    <text evidence="1">Belongs to the bacterial ribosomal protein bS20 family.</text>
</comment>
<reference key="1">
    <citation type="journal article" date="2005" name="Genome Res.">
        <title>Genome sequence of Blochmannia pennsylvanicus indicates parallel evolutionary trends among bacterial mutualists of insects.</title>
        <authorList>
            <person name="Degnan P.H."/>
            <person name="Lazarus A.B."/>
            <person name="Wernegreen J.J."/>
        </authorList>
    </citation>
    <scope>NUCLEOTIDE SEQUENCE [LARGE SCALE GENOMIC DNA]</scope>
    <source>
        <strain>BPEN</strain>
    </source>
</reference>
<feature type="chain" id="PRO_0000224958" description="Small ribosomal subunit protein bS20">
    <location>
        <begin position="1"/>
        <end position="88"/>
    </location>
</feature>
<feature type="region of interest" description="Disordered" evidence="2">
    <location>
        <begin position="1"/>
        <end position="20"/>
    </location>
</feature>
<protein>
    <recommendedName>
        <fullName evidence="1">Small ribosomal subunit protein bS20</fullName>
    </recommendedName>
    <alternativeName>
        <fullName evidence="3">30S ribosomal protein S20</fullName>
    </alternativeName>
</protein>
<keyword id="KW-1185">Reference proteome</keyword>
<keyword id="KW-0687">Ribonucleoprotein</keyword>
<keyword id="KW-0689">Ribosomal protein</keyword>
<keyword id="KW-0694">RNA-binding</keyword>
<keyword id="KW-0699">rRNA-binding</keyword>
<gene>
    <name evidence="1" type="primary">rpsT</name>
    <name type="ordered locus">BPEN_120</name>
</gene>
<name>RS20_BLOPB</name>
<dbReference type="EMBL" id="CP000016">
    <property type="protein sequence ID" value="AAZ40760.1"/>
    <property type="molecule type" value="Genomic_DNA"/>
</dbReference>
<dbReference type="RefSeq" id="WP_011282667.1">
    <property type="nucleotide sequence ID" value="NC_007292.1"/>
</dbReference>
<dbReference type="SMR" id="Q493S5"/>
<dbReference type="STRING" id="291272.BPEN_120"/>
<dbReference type="KEGG" id="bpn:BPEN_120"/>
<dbReference type="eggNOG" id="COG0268">
    <property type="taxonomic scope" value="Bacteria"/>
</dbReference>
<dbReference type="HOGENOM" id="CLU_160655_4_0_6"/>
<dbReference type="OrthoDB" id="9807974at2"/>
<dbReference type="Proteomes" id="UP000007794">
    <property type="component" value="Chromosome"/>
</dbReference>
<dbReference type="GO" id="GO:0005829">
    <property type="term" value="C:cytosol"/>
    <property type="evidence" value="ECO:0007669"/>
    <property type="project" value="TreeGrafter"/>
</dbReference>
<dbReference type="GO" id="GO:0015935">
    <property type="term" value="C:small ribosomal subunit"/>
    <property type="evidence" value="ECO:0007669"/>
    <property type="project" value="TreeGrafter"/>
</dbReference>
<dbReference type="GO" id="GO:0070181">
    <property type="term" value="F:small ribosomal subunit rRNA binding"/>
    <property type="evidence" value="ECO:0007669"/>
    <property type="project" value="TreeGrafter"/>
</dbReference>
<dbReference type="GO" id="GO:0003735">
    <property type="term" value="F:structural constituent of ribosome"/>
    <property type="evidence" value="ECO:0007669"/>
    <property type="project" value="InterPro"/>
</dbReference>
<dbReference type="GO" id="GO:0006412">
    <property type="term" value="P:translation"/>
    <property type="evidence" value="ECO:0007669"/>
    <property type="project" value="UniProtKB-UniRule"/>
</dbReference>
<dbReference type="FunFam" id="1.20.58.110:FF:000001">
    <property type="entry name" value="30S ribosomal protein S20"/>
    <property type="match status" value="1"/>
</dbReference>
<dbReference type="Gene3D" id="1.20.58.110">
    <property type="entry name" value="Ribosomal protein S20"/>
    <property type="match status" value="1"/>
</dbReference>
<dbReference type="HAMAP" id="MF_00500">
    <property type="entry name" value="Ribosomal_bS20"/>
    <property type="match status" value="1"/>
</dbReference>
<dbReference type="InterPro" id="IPR002583">
    <property type="entry name" value="Ribosomal_bS20"/>
</dbReference>
<dbReference type="InterPro" id="IPR036510">
    <property type="entry name" value="Ribosomal_bS20_sf"/>
</dbReference>
<dbReference type="NCBIfam" id="TIGR00029">
    <property type="entry name" value="S20"/>
    <property type="match status" value="1"/>
</dbReference>
<dbReference type="PANTHER" id="PTHR33398">
    <property type="entry name" value="30S RIBOSOMAL PROTEIN S20"/>
    <property type="match status" value="1"/>
</dbReference>
<dbReference type="PANTHER" id="PTHR33398:SF1">
    <property type="entry name" value="SMALL RIBOSOMAL SUBUNIT PROTEIN BS20C"/>
    <property type="match status" value="1"/>
</dbReference>
<dbReference type="Pfam" id="PF01649">
    <property type="entry name" value="Ribosomal_S20p"/>
    <property type="match status" value="1"/>
</dbReference>
<dbReference type="SUPFAM" id="SSF46992">
    <property type="entry name" value="Ribosomal protein S20"/>
    <property type="match status" value="1"/>
</dbReference>
<sequence>MANTKSARKSLIKSKQQRKCNASRRSMLRTFIKKVYTAIETKDKTAAMTAFVFMQKKIDHQACKGLIHKNKAARCKSRTFARIRSMGF</sequence>
<organism>
    <name type="scientific">Blochmanniella pennsylvanica (strain BPEN)</name>
    <dbReference type="NCBI Taxonomy" id="291272"/>
    <lineage>
        <taxon>Bacteria</taxon>
        <taxon>Pseudomonadati</taxon>
        <taxon>Pseudomonadota</taxon>
        <taxon>Gammaproteobacteria</taxon>
        <taxon>Enterobacterales</taxon>
        <taxon>Enterobacteriaceae</taxon>
        <taxon>ant endosymbionts</taxon>
        <taxon>Candidatus Blochmanniella</taxon>
    </lineage>
</organism>